<gene>
    <name evidence="1" type="primary">rpl24e</name>
    <name type="ordered locus">MMP0639</name>
</gene>
<dbReference type="EMBL" id="BX950229">
    <property type="protein sequence ID" value="CAF30195.1"/>
    <property type="molecule type" value="Genomic_DNA"/>
</dbReference>
<dbReference type="RefSeq" id="WP_011170583.1">
    <property type="nucleotide sequence ID" value="NC_005791.1"/>
</dbReference>
<dbReference type="SMR" id="P61123"/>
<dbReference type="STRING" id="267377.MMP0639"/>
<dbReference type="EnsemblBacteria" id="CAF30195">
    <property type="protein sequence ID" value="CAF30195"/>
    <property type="gene ID" value="MMP0639"/>
</dbReference>
<dbReference type="KEGG" id="mmp:MMP0639"/>
<dbReference type="PATRIC" id="fig|267377.15.peg.656"/>
<dbReference type="eggNOG" id="arCOG01950">
    <property type="taxonomic scope" value="Archaea"/>
</dbReference>
<dbReference type="HOGENOM" id="CLU_190191_0_0_2"/>
<dbReference type="OrthoDB" id="55506at2157"/>
<dbReference type="Proteomes" id="UP000000590">
    <property type="component" value="Chromosome"/>
</dbReference>
<dbReference type="GO" id="GO:1990904">
    <property type="term" value="C:ribonucleoprotein complex"/>
    <property type="evidence" value="ECO:0007669"/>
    <property type="project" value="UniProtKB-KW"/>
</dbReference>
<dbReference type="GO" id="GO:0005840">
    <property type="term" value="C:ribosome"/>
    <property type="evidence" value="ECO:0007669"/>
    <property type="project" value="UniProtKB-KW"/>
</dbReference>
<dbReference type="GO" id="GO:0019843">
    <property type="term" value="F:rRNA binding"/>
    <property type="evidence" value="ECO:0007669"/>
    <property type="project" value="UniProtKB-UniRule"/>
</dbReference>
<dbReference type="GO" id="GO:0003735">
    <property type="term" value="F:structural constituent of ribosome"/>
    <property type="evidence" value="ECO:0007669"/>
    <property type="project" value="InterPro"/>
</dbReference>
<dbReference type="GO" id="GO:0008270">
    <property type="term" value="F:zinc ion binding"/>
    <property type="evidence" value="ECO:0007669"/>
    <property type="project" value="UniProtKB-UniRule"/>
</dbReference>
<dbReference type="GO" id="GO:0006412">
    <property type="term" value="P:translation"/>
    <property type="evidence" value="ECO:0007669"/>
    <property type="project" value="UniProtKB-UniRule"/>
</dbReference>
<dbReference type="CDD" id="cd00472">
    <property type="entry name" value="Ribosomal_L24e_L24"/>
    <property type="match status" value="1"/>
</dbReference>
<dbReference type="Gene3D" id="2.30.170.20">
    <property type="entry name" value="Ribosomal protein L24e"/>
    <property type="match status" value="1"/>
</dbReference>
<dbReference type="HAMAP" id="MF_00773">
    <property type="entry name" value="Ribosomal_eL24"/>
    <property type="match status" value="1"/>
</dbReference>
<dbReference type="InterPro" id="IPR038630">
    <property type="entry name" value="L24e/L24_sf"/>
</dbReference>
<dbReference type="InterPro" id="IPR056366">
    <property type="entry name" value="Ribosomal_eL24"/>
</dbReference>
<dbReference type="InterPro" id="IPR055345">
    <property type="entry name" value="Ribosomal_eL24-rel_arc"/>
</dbReference>
<dbReference type="InterPro" id="IPR000988">
    <property type="entry name" value="Ribosomal_eL24-rel_N"/>
</dbReference>
<dbReference type="InterPro" id="IPR023442">
    <property type="entry name" value="Ribosomal_eL24_CS"/>
</dbReference>
<dbReference type="InterPro" id="IPR011017">
    <property type="entry name" value="TRASH_dom"/>
</dbReference>
<dbReference type="NCBIfam" id="NF034186">
    <property type="entry name" value="PRK14891.1-1"/>
    <property type="match status" value="1"/>
</dbReference>
<dbReference type="PANTHER" id="PTHR10792">
    <property type="entry name" value="60S RIBOSOMAL PROTEIN L24"/>
    <property type="match status" value="1"/>
</dbReference>
<dbReference type="PANTHER" id="PTHR10792:SF1">
    <property type="entry name" value="RIBOSOMAL PROTEIN L24"/>
    <property type="match status" value="1"/>
</dbReference>
<dbReference type="Pfam" id="PF01246">
    <property type="entry name" value="Ribosomal_L24e"/>
    <property type="match status" value="1"/>
</dbReference>
<dbReference type="SMART" id="SM00746">
    <property type="entry name" value="TRASH"/>
    <property type="match status" value="1"/>
</dbReference>
<dbReference type="SUPFAM" id="SSF57716">
    <property type="entry name" value="Glucocorticoid receptor-like (DNA-binding domain)"/>
    <property type="match status" value="1"/>
</dbReference>
<dbReference type="PROSITE" id="PS01073">
    <property type="entry name" value="RIBOSOMAL_L24E"/>
    <property type="match status" value="1"/>
</dbReference>
<reference key="1">
    <citation type="journal article" date="2004" name="J. Bacteriol.">
        <title>Complete genome sequence of the genetically tractable hydrogenotrophic methanogen Methanococcus maripaludis.</title>
        <authorList>
            <person name="Hendrickson E.L."/>
            <person name="Kaul R."/>
            <person name="Zhou Y."/>
            <person name="Bovee D."/>
            <person name="Chapman P."/>
            <person name="Chung J."/>
            <person name="Conway de Macario E."/>
            <person name="Dodsworth J.A."/>
            <person name="Gillett W."/>
            <person name="Graham D.E."/>
            <person name="Hackett M."/>
            <person name="Haydock A.K."/>
            <person name="Kang A."/>
            <person name="Land M.L."/>
            <person name="Levy R."/>
            <person name="Lie T.J."/>
            <person name="Major T.A."/>
            <person name="Moore B.C."/>
            <person name="Porat I."/>
            <person name="Palmeiri A."/>
            <person name="Rouse G."/>
            <person name="Saenphimmachak C."/>
            <person name="Soell D."/>
            <person name="Van Dien S."/>
            <person name="Wang T."/>
            <person name="Whitman W.B."/>
            <person name="Xia Q."/>
            <person name="Zhang Y."/>
            <person name="Larimer F.W."/>
            <person name="Olson M.V."/>
            <person name="Leigh J.A."/>
        </authorList>
    </citation>
    <scope>NUCLEOTIDE SEQUENCE [LARGE SCALE GENOMIC DNA]</scope>
    <source>
        <strain>DSM 14266 / JCM 13030 / NBRC 101832 / S2 / LL</strain>
    </source>
</reference>
<accession>P61123</accession>
<name>RL24E_METMP</name>
<comment type="function">
    <text evidence="1">Binds to the 23S rRNA.</text>
</comment>
<comment type="cofactor">
    <cofactor evidence="1">
        <name>Zn(2+)</name>
        <dbReference type="ChEBI" id="CHEBI:29105"/>
    </cofactor>
    <text evidence="1">Binds 1 zinc ion per subunit.</text>
</comment>
<comment type="subunit">
    <text evidence="1">Part of the 50S ribosomal subunit. Forms a cluster with proteins L3 and L14.</text>
</comment>
<comment type="similarity">
    <text evidence="1">Belongs to the eukaryotic ribosomal protein eL24 family.</text>
</comment>
<organism>
    <name type="scientific">Methanococcus maripaludis (strain DSM 14266 / JCM 13030 / NBRC 101832 / S2 / LL)</name>
    <dbReference type="NCBI Taxonomy" id="267377"/>
    <lineage>
        <taxon>Archaea</taxon>
        <taxon>Methanobacteriati</taxon>
        <taxon>Methanobacteriota</taxon>
        <taxon>Methanomada group</taxon>
        <taxon>Methanococci</taxon>
        <taxon>Methanococcales</taxon>
        <taxon>Methanococcaceae</taxon>
        <taxon>Methanococcus</taxon>
    </lineage>
</organism>
<proteinExistence type="inferred from homology"/>
<protein>
    <recommendedName>
        <fullName evidence="1">Large ribosomal subunit protein eL24</fullName>
    </recommendedName>
    <alternativeName>
        <fullName evidence="2">50S ribosomal protein L24e</fullName>
    </alternativeName>
</protein>
<keyword id="KW-0479">Metal-binding</keyword>
<keyword id="KW-1185">Reference proteome</keyword>
<keyword id="KW-0687">Ribonucleoprotein</keyword>
<keyword id="KW-0689">Ribosomal protein</keyword>
<keyword id="KW-0694">RNA-binding</keyword>
<keyword id="KW-0699">rRNA-binding</keyword>
<keyword id="KW-0862">Zinc</keyword>
<keyword id="KW-0863">Zinc-finger</keyword>
<evidence type="ECO:0000255" key="1">
    <source>
        <dbReference type="HAMAP-Rule" id="MF_00773"/>
    </source>
</evidence>
<evidence type="ECO:0000305" key="2"/>
<sequence>MEWKTCSFCEGTIEPGCGKKYVKKDGSVMHFCSSKCEKNFKLGRVGRKLKWTNTFKRINRGQ</sequence>
<feature type="chain" id="PRO_0000136919" description="Large ribosomal subunit protein eL24">
    <location>
        <begin position="1"/>
        <end position="62"/>
    </location>
</feature>
<feature type="zinc finger region" description="C4-type" evidence="1">
    <location>
        <begin position="6"/>
        <end position="36"/>
    </location>
</feature>
<feature type="binding site" evidence="1">
    <location>
        <position position="6"/>
    </location>
    <ligand>
        <name>Zn(2+)</name>
        <dbReference type="ChEBI" id="CHEBI:29105"/>
    </ligand>
</feature>
<feature type="binding site" evidence="1">
    <location>
        <position position="9"/>
    </location>
    <ligand>
        <name>Zn(2+)</name>
        <dbReference type="ChEBI" id="CHEBI:29105"/>
    </ligand>
</feature>
<feature type="binding site" evidence="1">
    <location>
        <position position="32"/>
    </location>
    <ligand>
        <name>Zn(2+)</name>
        <dbReference type="ChEBI" id="CHEBI:29105"/>
    </ligand>
</feature>
<feature type="binding site" evidence="1">
    <location>
        <position position="36"/>
    </location>
    <ligand>
        <name>Zn(2+)</name>
        <dbReference type="ChEBI" id="CHEBI:29105"/>
    </ligand>
</feature>